<comment type="subcellular location">
    <subcellularLocation>
        <location evidence="1">Host nucleus</location>
        <location evidence="1">Host nucleolus</location>
    </subcellularLocation>
</comment>
<comment type="PTM">
    <text evidence="1">Phosphorylated.</text>
</comment>
<comment type="similarity">
    <text evidence="3">Belongs to the HHV-1 US8.5 protein family.</text>
</comment>
<protein>
    <recommendedName>
        <fullName>Protein US8.5</fullName>
    </recommendedName>
</protein>
<evidence type="ECO:0000250" key="1"/>
<evidence type="ECO:0000256" key="2">
    <source>
        <dbReference type="SAM" id="MobiDB-lite"/>
    </source>
</evidence>
<evidence type="ECO:0000305" key="3"/>
<sequence length="146" mass="15149">MDPALRSYHQRLRLYTPIARGVNLAARSPPLVREARAVVTPRPPIRPSSGKASSDDADVGDELIAIADARGDPPETLPPGAGGAAPACRRPPRGGSPAAFPVALHAVDAPSQFVTWLAVRWLRGAVGLGAVLCGIAFYVTSIARGA</sequence>
<proteinExistence type="inferred from homology"/>
<gene>
    <name type="ORF">US8.5</name>
</gene>
<dbReference type="EMBL" id="Z86099">
    <property type="protein sequence ID" value="CAB06716.1"/>
    <property type="molecule type" value="Genomic_DNA"/>
</dbReference>
<dbReference type="SMR" id="P89476"/>
<dbReference type="DNASU" id="1487361"/>
<dbReference type="KEGG" id="vg:1487361"/>
<dbReference type="Proteomes" id="UP000001874">
    <property type="component" value="Segment"/>
</dbReference>
<dbReference type="GO" id="GO:0044196">
    <property type="term" value="C:host cell nucleolus"/>
    <property type="evidence" value="ECO:0007669"/>
    <property type="project" value="UniProtKB-SubCell"/>
</dbReference>
<dbReference type="InterPro" id="IPR017377">
    <property type="entry name" value="Herpes_US8A"/>
</dbReference>
<dbReference type="PIRSF" id="PIRSF038076">
    <property type="entry name" value="US8A"/>
    <property type="match status" value="1"/>
</dbReference>
<name>US8A_HHV2H</name>
<reference key="1">
    <citation type="journal article" date="1998" name="J. Virol.">
        <title>The genome sequence of herpes simplex virus type 2.</title>
        <authorList>
            <person name="Dolan A."/>
            <person name="Jamieson F.E."/>
            <person name="Cunningham C."/>
            <person name="Barnett B.C."/>
            <person name="McGeoch D.J."/>
        </authorList>
    </citation>
    <scope>NUCLEOTIDE SEQUENCE [LARGE SCALE GENOMIC DNA]</scope>
</reference>
<accession>P89476</accession>
<organism>
    <name type="scientific">Human herpesvirus 2 (strain HG52)</name>
    <name type="common">HHV-2</name>
    <name type="synonym">Human herpes simplex virus 2</name>
    <dbReference type="NCBI Taxonomy" id="10315"/>
    <lineage>
        <taxon>Viruses</taxon>
        <taxon>Duplodnaviria</taxon>
        <taxon>Heunggongvirae</taxon>
        <taxon>Peploviricota</taxon>
        <taxon>Herviviricetes</taxon>
        <taxon>Herpesvirales</taxon>
        <taxon>Orthoherpesviridae</taxon>
        <taxon>Alphaherpesvirinae</taxon>
        <taxon>Simplexvirus</taxon>
        <taxon>Simplexvirus humanalpha2</taxon>
        <taxon>Human herpesvirus 2</taxon>
    </lineage>
</organism>
<feature type="chain" id="PRO_0000385159" description="Protein US8.5">
    <location>
        <begin position="1"/>
        <end position="146"/>
    </location>
</feature>
<feature type="region of interest" description="Disordered" evidence="2">
    <location>
        <begin position="63"/>
        <end position="93"/>
    </location>
</feature>
<feature type="compositionally biased region" description="Low complexity" evidence="2">
    <location>
        <begin position="84"/>
        <end position="93"/>
    </location>
</feature>
<keyword id="KW-1048">Host nucleus</keyword>
<keyword id="KW-0597">Phosphoprotein</keyword>
<keyword id="KW-1185">Reference proteome</keyword>
<organismHost>
    <name type="scientific">Homo sapiens</name>
    <name type="common">Human</name>
    <dbReference type="NCBI Taxonomy" id="9606"/>
</organismHost>